<protein>
    <recommendedName>
        <fullName>Putative S-adenosyl-L-methionine-dependent methyltransferase Mvan_0104</fullName>
        <ecNumber>2.1.1.-</ecNumber>
    </recommendedName>
</protein>
<evidence type="ECO:0000250" key="1"/>
<evidence type="ECO:0000305" key="2"/>
<feature type="chain" id="PRO_0000361257" description="Putative S-adenosyl-L-methionine-dependent methyltransferase Mvan_0104">
    <location>
        <begin position="1"/>
        <end position="309"/>
    </location>
</feature>
<feature type="binding site" evidence="1">
    <location>
        <position position="134"/>
    </location>
    <ligand>
        <name>S-adenosyl-L-methionine</name>
        <dbReference type="ChEBI" id="CHEBI:59789"/>
    </ligand>
</feature>
<feature type="binding site" evidence="1">
    <location>
        <begin position="163"/>
        <end position="164"/>
    </location>
    <ligand>
        <name>S-adenosyl-L-methionine</name>
        <dbReference type="ChEBI" id="CHEBI:59789"/>
    </ligand>
</feature>
<name>Y104_MYCVP</name>
<reference key="1">
    <citation type="submission" date="2006-12" db="EMBL/GenBank/DDBJ databases">
        <title>Complete sequence of Mycobacterium vanbaalenii PYR-1.</title>
        <authorList>
            <consortium name="US DOE Joint Genome Institute"/>
            <person name="Copeland A."/>
            <person name="Lucas S."/>
            <person name="Lapidus A."/>
            <person name="Barry K."/>
            <person name="Detter J.C."/>
            <person name="Glavina del Rio T."/>
            <person name="Hammon N."/>
            <person name="Israni S."/>
            <person name="Dalin E."/>
            <person name="Tice H."/>
            <person name="Pitluck S."/>
            <person name="Singan V."/>
            <person name="Schmutz J."/>
            <person name="Larimer F."/>
            <person name="Land M."/>
            <person name="Hauser L."/>
            <person name="Kyrpides N."/>
            <person name="Anderson I.J."/>
            <person name="Miller C."/>
            <person name="Richardson P."/>
        </authorList>
    </citation>
    <scope>NUCLEOTIDE SEQUENCE [LARGE SCALE GENOMIC DNA]</scope>
    <source>
        <strain>DSM 7251 / JCM 13017 / BCRC 16820 / KCTC 9966 / NRRL B-24157 / PYR-1</strain>
    </source>
</reference>
<proteinExistence type="inferred from homology"/>
<organism>
    <name type="scientific">Mycolicibacterium vanbaalenii (strain DSM 7251 / JCM 13017 / BCRC 16820 / KCTC 9966 / NRRL B-24157 / PYR-1)</name>
    <name type="common">Mycobacterium vanbaalenii</name>
    <dbReference type="NCBI Taxonomy" id="350058"/>
    <lineage>
        <taxon>Bacteria</taxon>
        <taxon>Bacillati</taxon>
        <taxon>Actinomycetota</taxon>
        <taxon>Actinomycetes</taxon>
        <taxon>Mycobacteriales</taxon>
        <taxon>Mycobacteriaceae</taxon>
        <taxon>Mycolicibacterium</taxon>
    </lineage>
</organism>
<gene>
    <name type="ordered locus">Mvan_0104</name>
</gene>
<sequence length="309" mass="34109">MSSLRTDNDTWDIASSVGATAVMVAAARAAETERPEPLIDDPYAKILVAGAGNGAWQYIADDGFVAKVTESDPEIGPLFEHMKNYQAVRTHFFDAFFAAAVDAGIRQIVILASGLDSRAFRLPWPAGTTVFEIDQPLVLAYKSSTLASHGVQPTADRREVPIDLRQDWPTALTHAGFDADQPTAWLAEGLLMYLPADAQDRLFAQITELSAPGSRVAAESMGIHAQDRRERMRERFASITAQFDVEPMDITELTYEDPDRADVAQWLTAHGWRAEAVPSQDEMRRLHRLVEIADGDDQSFSTFTTAVKR</sequence>
<accession>A1T1A5</accession>
<keyword id="KW-0489">Methyltransferase</keyword>
<keyword id="KW-0949">S-adenosyl-L-methionine</keyword>
<keyword id="KW-0808">Transferase</keyword>
<dbReference type="EC" id="2.1.1.-"/>
<dbReference type="EMBL" id="CP000511">
    <property type="protein sequence ID" value="ABM10955.1"/>
    <property type="molecule type" value="Genomic_DNA"/>
</dbReference>
<dbReference type="RefSeq" id="WP_011777429.1">
    <property type="nucleotide sequence ID" value="NC_008726.1"/>
</dbReference>
<dbReference type="SMR" id="A1T1A5"/>
<dbReference type="STRING" id="350058.Mvan_0104"/>
<dbReference type="KEGG" id="mva:Mvan_0104"/>
<dbReference type="eggNOG" id="COG3315">
    <property type="taxonomic scope" value="Bacteria"/>
</dbReference>
<dbReference type="HOGENOM" id="CLU_056160_2_1_11"/>
<dbReference type="Proteomes" id="UP000009159">
    <property type="component" value="Chromosome"/>
</dbReference>
<dbReference type="GO" id="GO:0008168">
    <property type="term" value="F:methyltransferase activity"/>
    <property type="evidence" value="ECO:0007669"/>
    <property type="project" value="UniProtKB-KW"/>
</dbReference>
<dbReference type="GO" id="GO:0032259">
    <property type="term" value="P:methylation"/>
    <property type="evidence" value="ECO:0007669"/>
    <property type="project" value="UniProtKB-KW"/>
</dbReference>
<dbReference type="FunFam" id="3.40.50.150:FF:000152">
    <property type="entry name" value="S-adenosyl-L-methionine-dependent methyltransferase"/>
    <property type="match status" value="1"/>
</dbReference>
<dbReference type="Gene3D" id="3.40.50.150">
    <property type="entry name" value="Vaccinia Virus protein VP39"/>
    <property type="match status" value="1"/>
</dbReference>
<dbReference type="InterPro" id="IPR007213">
    <property type="entry name" value="Ppm1/Ppm2/Tcmp"/>
</dbReference>
<dbReference type="InterPro" id="IPR029063">
    <property type="entry name" value="SAM-dependent_MTases_sf"/>
</dbReference>
<dbReference type="InterPro" id="IPR011610">
    <property type="entry name" value="SAM_mthyl_Trfase_ML2640-like"/>
</dbReference>
<dbReference type="NCBIfam" id="TIGR00027">
    <property type="entry name" value="mthyl_TIGR00027"/>
    <property type="match status" value="1"/>
</dbReference>
<dbReference type="PANTHER" id="PTHR43619">
    <property type="entry name" value="S-ADENOSYL-L-METHIONINE-DEPENDENT METHYLTRANSFERASE YKTD-RELATED"/>
    <property type="match status" value="1"/>
</dbReference>
<dbReference type="PANTHER" id="PTHR43619:SF2">
    <property type="entry name" value="S-ADENOSYL-L-METHIONINE-DEPENDENT METHYLTRANSFERASES SUPERFAMILY PROTEIN"/>
    <property type="match status" value="1"/>
</dbReference>
<dbReference type="Pfam" id="PF04072">
    <property type="entry name" value="LCM"/>
    <property type="match status" value="1"/>
</dbReference>
<dbReference type="SUPFAM" id="SSF53335">
    <property type="entry name" value="S-adenosyl-L-methionine-dependent methyltransferases"/>
    <property type="match status" value="1"/>
</dbReference>
<comment type="function">
    <text evidence="1">Exhibits S-adenosyl-L-methionine-dependent methyltransferase activity.</text>
</comment>
<comment type="similarity">
    <text evidence="2">Belongs to the UPF0677 family.</text>
</comment>